<proteinExistence type="evidence at protein level"/>
<accession>Q62910</accession>
<accession>O89092</accession>
<accession>Q62911</accession>
<accession>Q810Z8</accession>
<feature type="chain" id="PRO_0000209732" description="Synaptojanin-1">
    <location>
        <begin position="1"/>
        <end position="1574"/>
    </location>
</feature>
<feature type="domain" description="SAC" evidence="6">
    <location>
        <begin position="119"/>
        <end position="442"/>
    </location>
</feature>
<feature type="domain" description="RRM" evidence="5">
    <location>
        <begin position="894"/>
        <end position="971"/>
    </location>
</feature>
<feature type="repeat" description="1">
    <location>
        <begin position="1401"/>
        <end position="1403"/>
    </location>
</feature>
<feature type="repeat" description="2">
    <location>
        <begin position="1410"/>
        <end position="1412"/>
    </location>
</feature>
<feature type="repeat" description="3">
    <location>
        <begin position="1421"/>
        <end position="1423"/>
    </location>
</feature>
<feature type="region of interest" description="Catalytic" evidence="4">
    <location>
        <begin position="500"/>
        <end position="899"/>
    </location>
</feature>
<feature type="region of interest" description="Disordered" evidence="7">
    <location>
        <begin position="1029"/>
        <end position="1327"/>
    </location>
</feature>
<feature type="region of interest" description="Disordered" evidence="7">
    <location>
        <begin position="1382"/>
        <end position="1519"/>
    </location>
</feature>
<feature type="region of interest" description="3 X 3 AA repeats of N-P-F" evidence="13">
    <location>
        <begin position="1401"/>
        <end position="1423"/>
    </location>
</feature>
<feature type="region of interest" description="Disordered" evidence="7">
    <location>
        <begin position="1532"/>
        <end position="1574"/>
    </location>
</feature>
<feature type="compositionally biased region" description="Low complexity" evidence="7">
    <location>
        <begin position="1029"/>
        <end position="1054"/>
    </location>
</feature>
<feature type="compositionally biased region" description="Polar residues" evidence="7">
    <location>
        <begin position="1090"/>
        <end position="1100"/>
    </location>
</feature>
<feature type="compositionally biased region" description="Pro residues" evidence="7">
    <location>
        <begin position="1105"/>
        <end position="1127"/>
    </location>
</feature>
<feature type="compositionally biased region" description="Low complexity" evidence="7">
    <location>
        <begin position="1287"/>
        <end position="1310"/>
    </location>
</feature>
<feature type="compositionally biased region" description="Polar residues" evidence="7">
    <location>
        <begin position="1389"/>
        <end position="1413"/>
    </location>
</feature>
<feature type="compositionally biased region" description="Polar residues" evidence="7">
    <location>
        <begin position="1424"/>
        <end position="1436"/>
    </location>
</feature>
<feature type="compositionally biased region" description="Polar residues" evidence="7">
    <location>
        <begin position="1472"/>
        <end position="1484"/>
    </location>
</feature>
<feature type="compositionally biased region" description="Pro residues" evidence="7">
    <location>
        <begin position="1535"/>
        <end position="1548"/>
    </location>
</feature>
<feature type="compositionally biased region" description="Low complexity" evidence="7">
    <location>
        <begin position="1549"/>
        <end position="1563"/>
    </location>
</feature>
<feature type="modified residue" description="Phosphoserine" evidence="18">
    <location>
        <position position="820"/>
    </location>
</feature>
<feature type="modified residue" description="Phosphoserine" evidence="2">
    <location>
        <position position="830"/>
    </location>
</feature>
<feature type="modified residue" description="Phosphoserine" evidence="18">
    <location>
        <position position="1053"/>
    </location>
</feature>
<feature type="modified residue" description="Phosphoserine" evidence="3">
    <location>
        <position position="1147"/>
    </location>
</feature>
<feature type="modified residue" description="Phosphoserine" evidence="18">
    <location>
        <position position="1175"/>
    </location>
</feature>
<feature type="modified residue" description="Omega-N-methylarginine" evidence="3">
    <location>
        <position position="1198"/>
    </location>
</feature>
<feature type="modified residue" description="Phosphothreonine" evidence="2">
    <location>
        <position position="1217"/>
    </location>
</feature>
<feature type="modified residue" description="Phosphoserine" evidence="2">
    <location>
        <position position="1289"/>
    </location>
</feature>
<feature type="modified residue" description="Phosphoserine" evidence="18">
    <location>
        <position position="1350"/>
    </location>
</feature>
<feature type="modified residue" description="Phosphothreonine" evidence="3">
    <location>
        <position position="1354"/>
    </location>
</feature>
<feature type="modified residue" description="Phosphoserine" evidence="18">
    <location>
        <position position="1566"/>
    </location>
</feature>
<feature type="splice variant" id="VSP_002684" description="In isoform 3 and isoform 6." evidence="16">
    <location>
        <begin position="1"/>
        <end position="400"/>
    </location>
</feature>
<feature type="splice variant" id="VSP_002685" description="In isoform 4, isoform 5 and isoform 6." evidence="15">
    <location>
        <begin position="1141"/>
        <end position="1156"/>
    </location>
</feature>
<feature type="splice variant" id="VSP_002686" description="In isoform 2 and isoform 5." evidence="15">
    <location>
        <begin position="1309"/>
        <end position="1574"/>
    </location>
</feature>
<reference key="1">
    <citation type="journal article" date="1996" name="Nature">
        <title>A presynaptic inositol-5-phosphatase.</title>
        <authorList>
            <person name="McPherson P.S."/>
            <person name="Garcia E.P."/>
            <person name="Slepnev V.I."/>
            <person name="David C."/>
            <person name="Zhang X."/>
            <person name="Grabs D."/>
            <person name="Sossin W.S."/>
            <person name="Bauerfeind R."/>
            <person name="Nemoto Y."/>
            <person name="De Camilli P."/>
        </authorList>
    </citation>
    <scope>NUCLEOTIDE SEQUENCE [MRNA] (ISOFORMS 1; 2; 4 AND 5)</scope>
    <scope>FUNCTION</scope>
    <scope>CATALYTIC ACTIVITY</scope>
    <source>
        <strain>Sprague-Dawley</strain>
        <tissue>Brain</tissue>
    </source>
</reference>
<reference key="2">
    <citation type="journal article" date="1998" name="FEBS Lett.">
        <title>Identification and characterisation of a novel splice variant of synaptojanin1.</title>
        <authorList>
            <person name="Woscholski R."/>
            <person name="Finan P.M."/>
            <person name="Radley E."/>
            <person name="Parker P.J."/>
        </authorList>
    </citation>
    <scope>NUCLEOTIDE SEQUENCE [MRNA] (ISOFORM 3)</scope>
    <scope>CATALYTIC ACTIVITY (ISOFORM 3)</scope>
    <scope>TISSUE SPECIFICITY (ISOFORM 3)</scope>
    <scope>DOMAIN (ISOFORM 3)</scope>
    <source>
        <tissue>Brain</tissue>
    </source>
</reference>
<reference key="3">
    <citation type="journal article" date="1996" name="J. Biol. Chem.">
        <title>Tissue-specific alternative splicing generates two synaptojanin isoforms with differential membrane binding properties.</title>
        <authorList>
            <person name="Ramjaun A.R."/>
            <person name="McPherson P.S."/>
        </authorList>
    </citation>
    <scope>ALTERNATIVE SPLICING</scope>
    <scope>TISSUE SPECIFICITY (ISOFORMS 1 AND 2)</scope>
    <scope>DEVELOPMENTAL STAGE (ISOFORMS 1 AND 2)</scope>
    <scope>SUBCELLULAR LOCATION (ISOFORM 1)</scope>
    <source>
        <tissue>Brain</tissue>
    </source>
</reference>
<reference key="4">
    <citation type="journal article" date="1997" name="FEBS Lett.">
        <title>Synaptojanin 1: localization on coated endocytic intermediates in nerve terminals and interaction of its 170 kDa isoform with Eps15.</title>
        <authorList>
            <person name="Haffner C."/>
            <person name="Takei K."/>
            <person name="Chen H."/>
            <person name="Ringstad N."/>
            <person name="Hudson A."/>
            <person name="Butler M.H."/>
            <person name="Salcini A.E."/>
            <person name="Di Fiore P.P."/>
            <person name="De Camilli P."/>
        </authorList>
    </citation>
    <scope>FUNCTION</scope>
    <scope>INTERACTION WITH EPS15</scope>
    <scope>TISSUE SPECIFICITY</scope>
    <scope>DOMAIN</scope>
</reference>
<reference key="5">
    <citation type="journal article" date="1997" name="Proc. Natl. Acad. Sci. U.S.A.">
        <title>The SH3p4/Sh3p8/SH3p13 protein family: binding partners for synaptojanin and dynamin via a Grb2-like Src homology 3 domain.</title>
        <authorList>
            <person name="Ringstad N."/>
            <person name="Nemoto Y."/>
            <person name="De Camilli P."/>
        </authorList>
    </citation>
    <scope>INTERACTION WITH SH3GL1; SH3GL2 AND SH3GL3</scope>
    <scope>DOMAIN</scope>
    <source>
        <tissue>Brain</tissue>
    </source>
</reference>
<reference key="6">
    <citation type="journal article" date="1997" name="J. Biol. Chem.">
        <title>Synaptojanin forms two separate complexes in the nerve terminal. Interactions with endophilin and amphiphysin.</title>
        <authorList>
            <person name="Micheva K.D."/>
            <person name="Kay B.K."/>
            <person name="McPherson P.S."/>
        </authorList>
    </citation>
    <scope>INTERACTION WITH SH3GL2; AMPH; DNM1 AND BIN1</scope>
    <scope>DOMAIN</scope>
</reference>
<reference key="7">
    <citation type="journal article" date="2007" name="FEBS Lett.">
        <title>Myosin 1E interacts with synaptojanin-1 and dynamin and is involved in endocytosis.</title>
        <authorList>
            <person name="Krendel M."/>
            <person name="Osterweil E.K."/>
            <person name="Mooseker M.S."/>
        </authorList>
    </citation>
    <scope>INTERACTION WITH MYO1E</scope>
</reference>
<reference key="8">
    <citation type="journal article" date="2012" name="Nat. Commun.">
        <title>Quantitative maps of protein phosphorylation sites across 14 different rat organs and tissues.</title>
        <authorList>
            <person name="Lundby A."/>
            <person name="Secher A."/>
            <person name="Lage K."/>
            <person name="Nordsborg N.B."/>
            <person name="Dmytriyev A."/>
            <person name="Lundby C."/>
            <person name="Olsen J.V."/>
        </authorList>
    </citation>
    <scope>PHOSPHORYLATION [LARGE SCALE ANALYSIS] AT SER-820; SER-1053; SER-1175; SER-1350 AND SER-1566</scope>
    <scope>IDENTIFICATION BY MASS SPECTROMETRY [LARGE SCALE ANALYSIS]</scope>
</reference>
<organism>
    <name type="scientific">Rattus norvegicus</name>
    <name type="common">Rat</name>
    <dbReference type="NCBI Taxonomy" id="10116"/>
    <lineage>
        <taxon>Eukaryota</taxon>
        <taxon>Metazoa</taxon>
        <taxon>Chordata</taxon>
        <taxon>Craniata</taxon>
        <taxon>Vertebrata</taxon>
        <taxon>Euteleostomi</taxon>
        <taxon>Mammalia</taxon>
        <taxon>Eutheria</taxon>
        <taxon>Euarchontoglires</taxon>
        <taxon>Glires</taxon>
        <taxon>Rodentia</taxon>
        <taxon>Myomorpha</taxon>
        <taxon>Muroidea</taxon>
        <taxon>Muridae</taxon>
        <taxon>Murinae</taxon>
        <taxon>Rattus</taxon>
    </lineage>
</organism>
<gene>
    <name type="primary">Synj1</name>
</gene>
<name>SYNJ1_RAT</name>
<sequence>MAFSKGFRIYHKLDPPPFSLIVETRHKEECLMFESGAVAVLSSAEKEAIKGTYAKVLDAYGLLGVLRLNLGDTMLHYLVLVTGCMSVGKIQESEVFRVTSTEFISLRVDASDEDRISEVRKVLNSGNFYFAWSASGVSLDLSLNAHRSMQEHTTDNRFFWNQSLHLHLKHYGVNCDDWLLRLMCGGVEIRTIYAAHKQAKACLISRLSCERAGTRFNVRGTNDDGHVANFVETEQVIYLDDCVSSFIQIRGSVPLFWEQPGLQVGSHRVRMSRGFEANAPAFDRHFRTLKDLYGKQIVVNLLGSKEGEHMLSKAFQSHLKASEHASDIHMVSFDYHQMVKGGKAEKLHSVLKPQVQKFLDYGFFYFDGSAVQRCQSGTVRTNCLDCLDRTNSVQAFLGLEMLAKQLEALGLAEKPQLVTRFQEVFRSMWSVNGDSISKIYAGTGALEGKAKLKDGARSVTRTIQNNFFDSSKQEAIDVLLLGNTLNSDLADKARALLTTGSLRVSEQTLQSASSKVLKNMCENFYKYSKPKKIRVCVGTWNVNGGKQFRSIAFKNQTLTDWLLDAPKLAGIQEFQDKRSKPTDIFAIGFEEMVELNAGNIVNASTTNQKLWAVELQKTISRDNKYVLLASEQLVGVCLFVFIRPQHAPFIRDVAVDTVKTGMGGATGNKGAVAIRMLFHTTSLCFVCSHFAAGQSQVKERNEDFVEIARKLSFPMGRMLFSHDYVFWCGDFNYRIDLPNEEVKELIRQQNWDSLIAGDQLINQKNAGQIFRGFLEGKVTFAPTYKYDLFSEDYDTSEKCRTPAWTDRVLWRRRKWPFDRSAEDLDLLNASFQDESKILYTWTPGTLLHYGRAELKTSDHRPVVALIDIDIFEVEAEERQKIYKEVIAVQGPPDGTVLVSIKSSAQENTFFDDALIDELLQQFAHFGEVILIRFVEDKMWVTFLEGSSALNVLSLNGKELLNRTITITLKSPDWIKTLEEEMSLEKISVTLPSSTSSTLLGEDAEVSADFDMEGDVDDYSAEVEELLPQHLQPSSSSGLGTSPSSSPRTSPCQSPTAPEYSAPSLPIRPSRAPSRTPGPLSSQGAPVDTQPAAQKESSQTIEPKRPPPPRPVAPPARPAPPQRPPPPSGARSPAPARKEFGGVGAPPSPGVTRREMEAPKSPGTARKDNIGRNQPSPQAGLAGPGPSGYGAARPTIPARAGVISAPQSQARVSAGRLTPESQSKPLETSKGPAVLPEPLKPQAAFPPQPSLPTPAQKLQDPLVPIAAPMPPSIPQSNLETPPLPPPRSRSSQSLPSDSSPQLQQEQPTGQQVKINGACGVKQEPTLKSDPFEDLSLSVLAVSKAQPSAQISPVLTPDPKMLIQLPSASQSKVNSLSSVSCMLTMPPVPEQSKSQESVGSSANPFPSLPTRNPFTDRTAAPGNPFRVQSQESEATSWLSKEEPVSNSPFPPLMPLSHDMSKPSSSLDGFEDNFDLQSQSTVKTSNPKGWVTFDEDEDFPTKGKSRSVYPDSLGNTAASFDDDWSKGTNVSFCVLPARRPPPPPPPVPLLPPGTTSSAGPSTTLSSKASPTLDFTER</sequence>
<keyword id="KW-0025">Alternative splicing</keyword>
<keyword id="KW-0963">Cytoplasm</keyword>
<keyword id="KW-0254">Endocytosis</keyword>
<keyword id="KW-0378">Hydrolase</keyword>
<keyword id="KW-0443">Lipid metabolism</keyword>
<keyword id="KW-0472">Membrane</keyword>
<keyword id="KW-0488">Methylation</keyword>
<keyword id="KW-0597">Phosphoprotein</keyword>
<keyword id="KW-1185">Reference proteome</keyword>
<keyword id="KW-0677">Repeat</keyword>
<keyword id="KW-0694">RNA-binding</keyword>
<evidence type="ECO:0000250" key="1">
    <source>
        <dbReference type="UniProtKB" id="O18964"/>
    </source>
</evidence>
<evidence type="ECO:0000250" key="2">
    <source>
        <dbReference type="UniProtKB" id="O43426"/>
    </source>
</evidence>
<evidence type="ECO:0000250" key="3">
    <source>
        <dbReference type="UniProtKB" id="Q8CHC4"/>
    </source>
</evidence>
<evidence type="ECO:0000255" key="4"/>
<evidence type="ECO:0000255" key="5">
    <source>
        <dbReference type="PROSITE-ProRule" id="PRU00176"/>
    </source>
</evidence>
<evidence type="ECO:0000255" key="6">
    <source>
        <dbReference type="PROSITE-ProRule" id="PRU00183"/>
    </source>
</evidence>
<evidence type="ECO:0000256" key="7">
    <source>
        <dbReference type="SAM" id="MobiDB-lite"/>
    </source>
</evidence>
<evidence type="ECO:0000269" key="8">
    <source>
    </source>
</evidence>
<evidence type="ECO:0000269" key="9">
    <source>
    </source>
</evidence>
<evidence type="ECO:0000269" key="10">
    <source>
    </source>
</evidence>
<evidence type="ECO:0000269" key="11">
    <source>
    </source>
</evidence>
<evidence type="ECO:0000269" key="12">
    <source>
    </source>
</evidence>
<evidence type="ECO:0000269" key="13">
    <source>
    </source>
</evidence>
<evidence type="ECO:0000269" key="14">
    <source>
    </source>
</evidence>
<evidence type="ECO:0000303" key="15">
    <source>
    </source>
</evidence>
<evidence type="ECO:0000303" key="16">
    <source>
    </source>
</evidence>
<evidence type="ECO:0000305" key="17"/>
<evidence type="ECO:0007744" key="18">
    <source>
    </source>
</evidence>
<protein>
    <recommendedName>
        <fullName>Synaptojanin-1</fullName>
        <ecNumber evidence="9">3.1.3.36</ecNumber>
    </recommendedName>
    <alternativeName>
        <fullName>Synaptic inositol 1,4,5-trisphosphate 5-phosphatase 1</fullName>
    </alternativeName>
</protein>
<comment type="function">
    <text evidence="1 9 13">Phosphatase that acts on various phosphoinositides, including phosphatidylinositol 4-phosphate, phosphatidylinositol (4,5)-bisphosphate and phosphatidylinositol (3,4,5)-trisphosphate (PubMed:8552192). Has a role in clathrin-mediated endocytosis (PubMed:9428629). Hydrolyzes PIP2 bound to actin regulatory proteins resulting in the rearrangement of actin filaments downstream of tyrosine kinase and ASH/GRB2 (By similarity).</text>
</comment>
<comment type="catalytic activity">
    <reaction evidence="9">
        <text>a 1,2-diacyl-sn-glycero-3-phospho-(1D-myo-inositol-4,5-bisphosphate) + H2O = a 1,2-diacyl-sn-glycero-3-phospho-(1D-myo-inositol 4-phosphate) + phosphate</text>
        <dbReference type="Rhea" id="RHEA:22764"/>
        <dbReference type="ChEBI" id="CHEBI:15377"/>
        <dbReference type="ChEBI" id="CHEBI:43474"/>
        <dbReference type="ChEBI" id="CHEBI:58178"/>
        <dbReference type="ChEBI" id="CHEBI:58456"/>
        <dbReference type="EC" id="3.1.3.36"/>
    </reaction>
</comment>
<comment type="catalytic activity">
    <molecule>Isoform 3</molecule>
    <reaction evidence="14">
        <text>a 1,2-diacyl-sn-glycero-3-phospho-(1D-myo-inositol-4,5-bisphosphate) + H2O = a 1,2-diacyl-sn-glycero-3-phospho-(1D-myo-inositol 4-phosphate) + phosphate</text>
        <dbReference type="Rhea" id="RHEA:22764"/>
        <dbReference type="ChEBI" id="CHEBI:15377"/>
        <dbReference type="ChEBI" id="CHEBI:43474"/>
        <dbReference type="ChEBI" id="CHEBI:58178"/>
        <dbReference type="ChEBI" id="CHEBI:58456"/>
        <dbReference type="EC" id="3.1.3.36"/>
    </reaction>
</comment>
<comment type="subunit">
    <text evidence="1 3 8 11 12 13">Interacts with ASH/GRB2. Interacts with PACSIN1, PACSIN2 and PACSIN3 (By similarity). Interacts with AMPH, SH3GL1, SH3GL2 and SH3GL3 (PubMed:9238017, PubMed:9341169). Interacts with MYO1E (via SH3 domain) (PubMed:17257598). Interacts with BIN1 and DNM1 (PubMed:9341169). Interacts with EPS15 (PubMed:9428629).</text>
</comment>
<comment type="interaction">
    <interactant intactId="EBI-1149123">
        <id>Q62910</id>
    </interactant>
    <interactant intactId="EBI-1149197">
        <id>O35179</id>
        <label>Sh3gl2</label>
    </interactant>
    <organismsDiffer>false</organismsDiffer>
    <experiments>2</experiments>
</comment>
<comment type="interaction">
    <interactant intactId="EBI-1149123">
        <id>Q62910</id>
    </interactant>
    <interactant intactId="EBI-1149266">
        <id>O35180</id>
        <label>Sh3gl3</label>
    </interactant>
    <organismsDiffer>false</organismsDiffer>
    <experiments>2</experiments>
</comment>
<comment type="interaction">
    <interactant intactId="EBI-1149123">
        <id>Q62910</id>
    </interactant>
    <interactant intactId="EBI-4279548">
        <id>Q12965</id>
        <label>MYO1E</label>
    </interactant>
    <organismsDiffer>true</organismsDiffer>
    <experiments>2</experiments>
</comment>
<comment type="interaction">
    <interactant intactId="EBI-1149123">
        <id>Q62910</id>
    </interactant>
    <interactant intactId="EBI-77938">
        <id>Q99962</id>
        <label>SH3GL2</label>
    </interactant>
    <organismsDiffer>true</organismsDiffer>
    <experiments>2</experiments>
</comment>
<comment type="subcellular location">
    <molecule>Isoform 1</molecule>
    <subcellularLocation>
        <location evidence="10">Membrane</location>
    </subcellularLocation>
</comment>
<comment type="subcellular location">
    <subcellularLocation>
        <location evidence="1">Cytoplasm</location>
        <location evidence="1">Perinuclear region</location>
    </subcellularLocation>
</comment>
<comment type="alternative products">
    <event type="alternative splicing"/>
    <isoform>
        <id>Q62910-1</id>
        <name>1</name>
        <name>170 kDa</name>
        <sequence type="displayed"/>
    </isoform>
    <isoform>
        <id>Q62910-2</id>
        <name>2</name>
        <name>145 kDa</name>
        <sequence type="described" ref="VSP_002686"/>
    </isoform>
    <isoform>
        <id>Q62910-3</id>
        <name>3</name>
        <name>Delta-SAC</name>
        <sequence type="described" ref="VSP_002684"/>
    </isoform>
    <isoform>
        <id>Q62910-4</id>
        <name>4</name>
        <name>170 kDa-16AA</name>
        <sequence type="described" ref="VSP_002685"/>
    </isoform>
    <isoform>
        <id>Q62910-5</id>
        <name>5</name>
        <name>145 kDa-16AA</name>
        <sequence type="described" ref="VSP_002685 VSP_002686"/>
    </isoform>
    <isoform>
        <id>Q62910-6</id>
        <name>6</name>
        <name>Delta-SAC-16AA</name>
        <sequence type="described" ref="VSP_002684 VSP_002685"/>
    </isoform>
    <text evidence="10">A stop codon is created in position 1309 of isoform 1 due to alternative splicing.</text>
</comment>
<comment type="tissue specificity">
    <molecule>Isoform 1</molecule>
    <text evidence="10 13">Found in neonatal brain, and in a wide variety of adult non-neuronal tissues. Concentrated at clathrin-coated endocytic intermediates in nerve terminals. Also detected in the lung and heart. Expressed at higher levels than isoform 2 in the testis and liver and is not detected in the skeletal muscle.</text>
</comment>
<comment type="tissue specificity">
    <molecule>Isoform 2</molecule>
    <text evidence="10">Expressed predominantly in the neurons, but is also found in all other tissues at much lower levels. Also detected in the lung and heart. Epressed at lower levels than isoform 1 in the testis and liver and is not detected in the skeletal muscle.</text>
</comment>
<comment type="tissue specificity">
    <molecule>Isoform 3</molecule>
    <text evidence="14">Expressed in the brain.</text>
</comment>
<comment type="developmental stage">
    <molecule>Isoform 1</molecule>
    <text evidence="10">Expression seen at 12 dpc, 16 dpc and 18 dpc. In the adult brain expression decreases to undetectable levels.</text>
</comment>
<comment type="developmental stage">
    <molecule>Isoform 2</molecule>
    <text evidence="10">Expression seen at 16 dpc and 18 dpc. In the adult brain expression increases dramatically as compared with its expression in embryonic brain.</text>
</comment>
<comment type="domain">
    <text evidence="13">Interacts with EPS15 (a clathrin coat-associated protein) via a C-terminal domain containing three Asn-Pro-Phe (NPF) repeats.</text>
</comment>
<comment type="domain">
    <text evidence="11 12">The C-terminal proline-rich region mediates binding to a variety of SH3 domain-containing proteins including AMPH, SH3GL1, SH3GL2 and SH3GL3.</text>
</comment>
<comment type="domain">
    <molecule>Isoform 3</molecule>
    <text evidence="14">Absence of SAC1 domain due to splicing does not alter its catalytic activity.</text>
</comment>
<comment type="similarity">
    <text evidence="17">Belongs to the synaptojanin family.</text>
</comment>
<comment type="similarity">
    <text evidence="17">In the central section; belongs to the inositol 1,4,5-trisphosphate 5-phosphatase family.</text>
</comment>
<dbReference type="EC" id="3.1.3.36" evidence="9"/>
<dbReference type="EMBL" id="U45479">
    <property type="protein sequence ID" value="AAB60525.2"/>
    <property type="molecule type" value="mRNA"/>
</dbReference>
<dbReference type="EMBL" id="U91836">
    <property type="protein sequence ID" value="AAO24807.1"/>
    <property type="molecule type" value="mRNA"/>
</dbReference>
<dbReference type="EMBL" id="AJ006855">
    <property type="protein sequence ID" value="CAA07267.1"/>
    <property type="status" value="ALT_TERM"/>
    <property type="molecule type" value="mRNA"/>
</dbReference>
<dbReference type="PIR" id="S68448">
    <property type="entry name" value="S68448"/>
</dbReference>
<dbReference type="RefSeq" id="NP_001401979.1">
    <molecule id="Q62910-2"/>
    <property type="nucleotide sequence ID" value="NM_001415050.1"/>
</dbReference>
<dbReference type="RefSeq" id="NP_445928.2">
    <property type="nucleotide sequence ID" value="NM_053476.2"/>
</dbReference>
<dbReference type="SMR" id="Q62910"/>
<dbReference type="BioGRID" id="250042">
    <property type="interactions" value="21"/>
</dbReference>
<dbReference type="CORUM" id="Q62910"/>
<dbReference type="ELM" id="Q62910"/>
<dbReference type="FunCoup" id="Q62910">
    <property type="interactions" value="2131"/>
</dbReference>
<dbReference type="IntAct" id="Q62910">
    <property type="interactions" value="15"/>
</dbReference>
<dbReference type="MINT" id="Q62910"/>
<dbReference type="STRING" id="10116.ENSRNOP00000060346"/>
<dbReference type="GlyGen" id="Q62910">
    <property type="glycosylation" value="2 sites, 1 O-linked glycan (1 site)"/>
</dbReference>
<dbReference type="iPTMnet" id="Q62910"/>
<dbReference type="PhosphoSitePlus" id="Q62910"/>
<dbReference type="jPOST" id="Q62910"/>
<dbReference type="PaxDb" id="10116-ENSRNOP00000045019"/>
<dbReference type="Ensembl" id="ENSRNOT00000052033.7">
    <molecule id="Q62910-2"/>
    <property type="protein sequence ID" value="ENSRNOP00000045019.6"/>
    <property type="gene ID" value="ENSRNOG00000002051.9"/>
</dbReference>
<dbReference type="GeneID" id="85238"/>
<dbReference type="KEGG" id="rno:85238"/>
<dbReference type="UCSC" id="RGD:69434">
    <molecule id="Q62910-1"/>
    <property type="organism name" value="rat"/>
</dbReference>
<dbReference type="AGR" id="RGD:69434"/>
<dbReference type="CTD" id="8867"/>
<dbReference type="RGD" id="69434">
    <property type="gene designation" value="Synj1"/>
</dbReference>
<dbReference type="VEuPathDB" id="HostDB:ENSRNOG00000002051"/>
<dbReference type="eggNOG" id="KOG0566">
    <property type="taxonomic scope" value="Eukaryota"/>
</dbReference>
<dbReference type="GeneTree" id="ENSGT00940000157964"/>
<dbReference type="InParanoid" id="Q62910"/>
<dbReference type="PhylomeDB" id="Q62910"/>
<dbReference type="Reactome" id="R-RNO-1660499">
    <property type="pathway name" value="Synthesis of PIPs at the plasma membrane"/>
</dbReference>
<dbReference type="Reactome" id="R-RNO-1855183">
    <property type="pathway name" value="Synthesis of IP2, IP, and Ins in the cytosol"/>
</dbReference>
<dbReference type="Reactome" id="R-RNO-1855204">
    <property type="pathway name" value="Synthesis of IP3 and IP4 in the cytosol"/>
</dbReference>
<dbReference type="Reactome" id="R-RNO-8856828">
    <property type="pathway name" value="Clathrin-mediated endocytosis"/>
</dbReference>
<dbReference type="PRO" id="PR:Q62910"/>
<dbReference type="Proteomes" id="UP000002494">
    <property type="component" value="Chromosome 11"/>
</dbReference>
<dbReference type="Bgee" id="ENSRNOG00000002051">
    <property type="expression patterns" value="Expressed in Ammon's horn and 19 other cell types or tissues"/>
</dbReference>
<dbReference type="ExpressionAtlas" id="Q62910">
    <property type="expression patterns" value="baseline and differential"/>
</dbReference>
<dbReference type="GO" id="GO:0030132">
    <property type="term" value="C:clathrin coat of coated pit"/>
    <property type="evidence" value="ECO:0000314"/>
    <property type="project" value="ParkinsonsUK-UCL"/>
</dbReference>
<dbReference type="GO" id="GO:0005737">
    <property type="term" value="C:cytoplasm"/>
    <property type="evidence" value="ECO:0000318"/>
    <property type="project" value="GO_Central"/>
</dbReference>
<dbReference type="GO" id="GO:0098978">
    <property type="term" value="C:glutamatergic synapse"/>
    <property type="evidence" value="ECO:0000266"/>
    <property type="project" value="RGD"/>
</dbReference>
<dbReference type="GO" id="GO:0016020">
    <property type="term" value="C:membrane"/>
    <property type="evidence" value="ECO:0000314"/>
    <property type="project" value="UniProtKB"/>
</dbReference>
<dbReference type="GO" id="GO:0030117">
    <property type="term" value="C:membrane coat"/>
    <property type="evidence" value="ECO:0000266"/>
    <property type="project" value="RGD"/>
</dbReference>
<dbReference type="GO" id="GO:0098688">
    <property type="term" value="C:parallel fiber to Purkinje cell synapse"/>
    <property type="evidence" value="ECO:0000314"/>
    <property type="project" value="SynGO"/>
</dbReference>
<dbReference type="GO" id="GO:0048471">
    <property type="term" value="C:perinuclear region of cytoplasm"/>
    <property type="evidence" value="ECO:0000250"/>
    <property type="project" value="UniProtKB"/>
</dbReference>
<dbReference type="GO" id="GO:0098793">
    <property type="term" value="C:presynapse"/>
    <property type="evidence" value="ECO:0000314"/>
    <property type="project" value="SynGO"/>
</dbReference>
<dbReference type="GO" id="GO:0032991">
    <property type="term" value="C:protein-containing complex"/>
    <property type="evidence" value="ECO:0000314"/>
    <property type="project" value="RGD"/>
</dbReference>
<dbReference type="GO" id="GO:0098685">
    <property type="term" value="C:Schaffer collateral - CA1 synapse"/>
    <property type="evidence" value="ECO:0000266"/>
    <property type="project" value="RGD"/>
</dbReference>
<dbReference type="GO" id="GO:0097060">
    <property type="term" value="C:synaptic membrane"/>
    <property type="evidence" value="ECO:0000314"/>
    <property type="project" value="ParkinsonsUK-UCL"/>
</dbReference>
<dbReference type="GO" id="GO:0043195">
    <property type="term" value="C:terminal bouton"/>
    <property type="evidence" value="ECO:0000250"/>
    <property type="project" value="ParkinsonsUK-UCL"/>
</dbReference>
<dbReference type="GO" id="GO:0012506">
    <property type="term" value="C:vesicle membrane"/>
    <property type="evidence" value="ECO:0000250"/>
    <property type="project" value="ParkinsonsUK-UCL"/>
</dbReference>
<dbReference type="GO" id="GO:1990175">
    <property type="term" value="F:EH domain binding"/>
    <property type="evidence" value="ECO:0000314"/>
    <property type="project" value="RGD"/>
</dbReference>
<dbReference type="GO" id="GO:0052658">
    <property type="term" value="F:inositol-1,4,5-trisphosphate 5-phosphatase activity"/>
    <property type="evidence" value="ECO:0000314"/>
    <property type="project" value="RGD"/>
</dbReference>
<dbReference type="GO" id="GO:0034595">
    <property type="term" value="F:phosphatidylinositol phosphate 5-phosphatase activity"/>
    <property type="evidence" value="ECO:0000314"/>
    <property type="project" value="RGD"/>
</dbReference>
<dbReference type="GO" id="GO:0004438">
    <property type="term" value="F:phosphatidylinositol-3-phosphate phosphatase activity"/>
    <property type="evidence" value="ECO:0000266"/>
    <property type="project" value="RGD"/>
</dbReference>
<dbReference type="GO" id="GO:0004439">
    <property type="term" value="F:phosphatidylinositol-4,5-bisphosphate 5-phosphatase activity"/>
    <property type="evidence" value="ECO:0000314"/>
    <property type="project" value="UniProtKB"/>
</dbReference>
<dbReference type="GO" id="GO:0043812">
    <property type="term" value="F:phosphatidylinositol-4-phosphate phosphatase activity"/>
    <property type="evidence" value="ECO:0000266"/>
    <property type="project" value="RGD"/>
</dbReference>
<dbReference type="GO" id="GO:0044877">
    <property type="term" value="F:protein-containing complex binding"/>
    <property type="evidence" value="ECO:0000314"/>
    <property type="project" value="RGD"/>
</dbReference>
<dbReference type="GO" id="GO:0003723">
    <property type="term" value="F:RNA binding"/>
    <property type="evidence" value="ECO:0007669"/>
    <property type="project" value="UniProtKB-KW"/>
</dbReference>
<dbReference type="GO" id="GO:0017124">
    <property type="term" value="F:SH3 domain binding"/>
    <property type="evidence" value="ECO:0000314"/>
    <property type="project" value="RGD"/>
</dbReference>
<dbReference type="GO" id="GO:0007612">
    <property type="term" value="P:learning"/>
    <property type="evidence" value="ECO:0000266"/>
    <property type="project" value="RGD"/>
</dbReference>
<dbReference type="GO" id="GO:0006836">
    <property type="term" value="P:neurotransmitter transport"/>
    <property type="evidence" value="ECO:0000266"/>
    <property type="project" value="RGD"/>
</dbReference>
<dbReference type="GO" id="GO:0046856">
    <property type="term" value="P:phosphatidylinositol dephosphorylation"/>
    <property type="evidence" value="ECO:0000266"/>
    <property type="project" value="RGD"/>
</dbReference>
<dbReference type="GO" id="GO:0046488">
    <property type="term" value="P:phosphatidylinositol metabolic process"/>
    <property type="evidence" value="ECO:0000266"/>
    <property type="project" value="RGD"/>
</dbReference>
<dbReference type="GO" id="GO:1904980">
    <property type="term" value="P:positive regulation of endosome organization"/>
    <property type="evidence" value="ECO:0000266"/>
    <property type="project" value="RGD"/>
</dbReference>
<dbReference type="GO" id="GO:0014015">
    <property type="term" value="P:positive regulation of gliogenesis"/>
    <property type="evidence" value="ECO:0000315"/>
    <property type="project" value="RGD"/>
</dbReference>
<dbReference type="GO" id="GO:0048260">
    <property type="term" value="P:positive regulation of receptor-mediated endocytosis"/>
    <property type="evidence" value="ECO:0000315"/>
    <property type="project" value="RGD"/>
</dbReference>
<dbReference type="GO" id="GO:0099149">
    <property type="term" value="P:regulation of postsynaptic neurotransmitter receptor internalization"/>
    <property type="evidence" value="ECO:0000266"/>
    <property type="project" value="RGD"/>
</dbReference>
<dbReference type="GO" id="GO:0034097">
    <property type="term" value="P:response to cytokine"/>
    <property type="evidence" value="ECO:0000315"/>
    <property type="project" value="RGD"/>
</dbReference>
<dbReference type="GO" id="GO:0032526">
    <property type="term" value="P:response to retinoic acid"/>
    <property type="evidence" value="ECO:0000315"/>
    <property type="project" value="RGD"/>
</dbReference>
<dbReference type="GO" id="GO:0048488">
    <property type="term" value="P:synaptic vesicle endocytosis"/>
    <property type="evidence" value="ECO:0000250"/>
    <property type="project" value="ParkinsonsUK-UCL"/>
</dbReference>
<dbReference type="GO" id="GO:0016082">
    <property type="term" value="P:synaptic vesicle priming"/>
    <property type="evidence" value="ECO:0000266"/>
    <property type="project" value="RGD"/>
</dbReference>
<dbReference type="GO" id="GO:0048489">
    <property type="term" value="P:synaptic vesicle transport"/>
    <property type="evidence" value="ECO:0000266"/>
    <property type="project" value="RGD"/>
</dbReference>
<dbReference type="GO" id="GO:0016191">
    <property type="term" value="P:synaptic vesicle uncoating"/>
    <property type="evidence" value="ECO:0000266"/>
    <property type="project" value="RGD"/>
</dbReference>
<dbReference type="CDD" id="cd09098">
    <property type="entry name" value="INPP5c_Synj1"/>
    <property type="match status" value="1"/>
</dbReference>
<dbReference type="CDD" id="cd12719">
    <property type="entry name" value="RRM_SYNJ1"/>
    <property type="match status" value="1"/>
</dbReference>
<dbReference type="FunFam" id="3.30.70.330:FF:000076">
    <property type="entry name" value="Synaptojanin-1 isoform 1"/>
    <property type="match status" value="1"/>
</dbReference>
<dbReference type="FunFam" id="3.60.10.10:FF:000003">
    <property type="entry name" value="Synaptojanin-1 isoform 1"/>
    <property type="match status" value="1"/>
</dbReference>
<dbReference type="Gene3D" id="3.30.70.330">
    <property type="match status" value="1"/>
</dbReference>
<dbReference type="Gene3D" id="3.60.10.10">
    <property type="entry name" value="Endonuclease/exonuclease/phosphatase"/>
    <property type="match status" value="1"/>
</dbReference>
<dbReference type="InterPro" id="IPR036691">
    <property type="entry name" value="Endo/exonu/phosph_ase_sf"/>
</dbReference>
<dbReference type="InterPro" id="IPR046985">
    <property type="entry name" value="IP5"/>
</dbReference>
<dbReference type="InterPro" id="IPR000300">
    <property type="entry name" value="IPPc"/>
</dbReference>
<dbReference type="InterPro" id="IPR012677">
    <property type="entry name" value="Nucleotide-bd_a/b_plait_sf"/>
</dbReference>
<dbReference type="InterPro" id="IPR035979">
    <property type="entry name" value="RBD_domain_sf"/>
</dbReference>
<dbReference type="InterPro" id="IPR000504">
    <property type="entry name" value="RRM_dom"/>
</dbReference>
<dbReference type="InterPro" id="IPR002013">
    <property type="entry name" value="SAC_dom"/>
</dbReference>
<dbReference type="InterPro" id="IPR015047">
    <property type="entry name" value="SYNJ1/2_RRM"/>
</dbReference>
<dbReference type="InterPro" id="IPR034971">
    <property type="entry name" value="SYNJ1_RRM"/>
</dbReference>
<dbReference type="PANTHER" id="PTHR11200">
    <property type="entry name" value="INOSITOL 5-PHOSPHATASE"/>
    <property type="match status" value="1"/>
</dbReference>
<dbReference type="PANTHER" id="PTHR11200:SF158">
    <property type="entry name" value="SYNAPTOJANIN-1"/>
    <property type="match status" value="1"/>
</dbReference>
<dbReference type="Pfam" id="PF08952">
    <property type="entry name" value="DUF1866"/>
    <property type="match status" value="1"/>
</dbReference>
<dbReference type="Pfam" id="PF22669">
    <property type="entry name" value="Exo_endo_phos2"/>
    <property type="match status" value="1"/>
</dbReference>
<dbReference type="Pfam" id="PF02383">
    <property type="entry name" value="Syja_N"/>
    <property type="match status" value="1"/>
</dbReference>
<dbReference type="SMART" id="SM01165">
    <property type="entry name" value="DUF1866"/>
    <property type="match status" value="1"/>
</dbReference>
<dbReference type="SMART" id="SM00128">
    <property type="entry name" value="IPPc"/>
    <property type="match status" value="1"/>
</dbReference>
<dbReference type="SUPFAM" id="SSF56219">
    <property type="entry name" value="DNase I-like"/>
    <property type="match status" value="1"/>
</dbReference>
<dbReference type="SUPFAM" id="SSF54928">
    <property type="entry name" value="RNA-binding domain, RBD"/>
    <property type="match status" value="1"/>
</dbReference>
<dbReference type="PROSITE" id="PS50102">
    <property type="entry name" value="RRM"/>
    <property type="match status" value="1"/>
</dbReference>
<dbReference type="PROSITE" id="PS50275">
    <property type="entry name" value="SAC"/>
    <property type="match status" value="1"/>
</dbReference>